<dbReference type="EMBL" id="AL078467">
    <property type="protein sequence ID" value="CAB43878.1"/>
    <property type="status" value="ALT_SEQ"/>
    <property type="molecule type" value="Genomic_DNA"/>
</dbReference>
<dbReference type="EMBL" id="AL161571">
    <property type="protein sequence ID" value="CAB81396.1"/>
    <property type="status" value="ALT_SEQ"/>
    <property type="molecule type" value="Genomic_DNA"/>
</dbReference>
<dbReference type="EMBL" id="CP002687">
    <property type="protein sequence ID" value="AEE85345.1"/>
    <property type="molecule type" value="Genomic_DNA"/>
</dbReference>
<dbReference type="EMBL" id="BT002893">
    <property type="protein sequence ID" value="AAO22709.1"/>
    <property type="molecule type" value="mRNA"/>
</dbReference>
<dbReference type="EMBL" id="BT020485">
    <property type="protein sequence ID" value="AAW38986.1"/>
    <property type="status" value="ALT_INIT"/>
    <property type="molecule type" value="mRNA"/>
</dbReference>
<dbReference type="EMBL" id="BT026427">
    <property type="protein sequence ID" value="ABH04534.1"/>
    <property type="molecule type" value="mRNA"/>
</dbReference>
<dbReference type="PIR" id="T08938">
    <property type="entry name" value="T08938"/>
</dbReference>
<dbReference type="RefSeq" id="NP_194476.2">
    <property type="nucleotide sequence ID" value="NM_118881.3"/>
</dbReference>
<dbReference type="BioGRID" id="14142">
    <property type="interactions" value="2"/>
</dbReference>
<dbReference type="FunCoup" id="Q84WQ5">
    <property type="interactions" value="286"/>
</dbReference>
<dbReference type="IntAct" id="Q84WQ5">
    <property type="interactions" value="2"/>
</dbReference>
<dbReference type="STRING" id="3702.Q84WQ5"/>
<dbReference type="PaxDb" id="3702-AT4G27460.1"/>
<dbReference type="EnsemblPlants" id="AT4G27460.1">
    <property type="protein sequence ID" value="AT4G27460.1"/>
    <property type="gene ID" value="AT4G27460"/>
</dbReference>
<dbReference type="GeneID" id="828855"/>
<dbReference type="Gramene" id="AT4G27460.1">
    <property type="protein sequence ID" value="AT4G27460.1"/>
    <property type="gene ID" value="AT4G27460"/>
</dbReference>
<dbReference type="KEGG" id="ath:AT4G27460"/>
<dbReference type="Araport" id="AT4G27460"/>
<dbReference type="TAIR" id="AT4G27460">
    <property type="gene designation" value="CBSX5"/>
</dbReference>
<dbReference type="eggNOG" id="KOG1764">
    <property type="taxonomic scope" value="Eukaryota"/>
</dbReference>
<dbReference type="HOGENOM" id="CLU_056468_0_0_1"/>
<dbReference type="InParanoid" id="Q84WQ5"/>
<dbReference type="OMA" id="VFREHLQ"/>
<dbReference type="PhylomeDB" id="Q84WQ5"/>
<dbReference type="PRO" id="PR:Q84WQ5"/>
<dbReference type="Proteomes" id="UP000006548">
    <property type="component" value="Chromosome 4"/>
</dbReference>
<dbReference type="ExpressionAtlas" id="Q84WQ5">
    <property type="expression patterns" value="baseline and differential"/>
</dbReference>
<dbReference type="GO" id="GO:0071456">
    <property type="term" value="P:cellular response to hypoxia"/>
    <property type="evidence" value="ECO:0007007"/>
    <property type="project" value="TAIR"/>
</dbReference>
<dbReference type="Gene3D" id="3.10.580.10">
    <property type="entry name" value="CBS-domain"/>
    <property type="match status" value="1"/>
</dbReference>
<dbReference type="InterPro" id="IPR050511">
    <property type="entry name" value="AMPK_gamma/SDS23_families"/>
</dbReference>
<dbReference type="InterPro" id="IPR000644">
    <property type="entry name" value="CBS_dom"/>
</dbReference>
<dbReference type="InterPro" id="IPR046342">
    <property type="entry name" value="CBS_dom_sf"/>
</dbReference>
<dbReference type="PANTHER" id="PTHR13780">
    <property type="entry name" value="AMP-ACTIVATED PROTEIN KINASE, GAMMA REGULATORY SUBUNIT"/>
    <property type="match status" value="1"/>
</dbReference>
<dbReference type="PANTHER" id="PTHR13780:SF159">
    <property type="entry name" value="CBS DOMAIN-CONTAINING PROTEIN CBSX5"/>
    <property type="match status" value="1"/>
</dbReference>
<dbReference type="Pfam" id="PF00571">
    <property type="entry name" value="CBS"/>
    <property type="match status" value="1"/>
</dbReference>
<dbReference type="SUPFAM" id="SSF54631">
    <property type="entry name" value="CBS-domain pair"/>
    <property type="match status" value="1"/>
</dbReference>
<dbReference type="PROSITE" id="PS51371">
    <property type="entry name" value="CBS"/>
    <property type="match status" value="2"/>
</dbReference>
<proteinExistence type="evidence at transcript level"/>
<keyword id="KW-0129">CBS domain</keyword>
<keyword id="KW-1185">Reference proteome</keyword>
<keyword id="KW-0677">Repeat</keyword>
<feature type="chain" id="PRO_0000403990" description="CBS domain-containing protein CBSX5">
    <location>
        <begin position="1"/>
        <end position="391"/>
    </location>
</feature>
<feature type="domain" description="CBS 1" evidence="1">
    <location>
        <begin position="16"/>
        <end position="81"/>
    </location>
</feature>
<feature type="domain" description="CBS 2" evidence="1">
    <location>
        <begin position="331"/>
        <end position="391"/>
    </location>
</feature>
<feature type="sequence conflict" description="In Ref. 3; AAO22709." evidence="2" ref="3">
    <original>I</original>
    <variation>V</variation>
    <location>
        <position position="290"/>
    </location>
</feature>
<organism>
    <name type="scientific">Arabidopsis thaliana</name>
    <name type="common">Mouse-ear cress</name>
    <dbReference type="NCBI Taxonomy" id="3702"/>
    <lineage>
        <taxon>Eukaryota</taxon>
        <taxon>Viridiplantae</taxon>
        <taxon>Streptophyta</taxon>
        <taxon>Embryophyta</taxon>
        <taxon>Tracheophyta</taxon>
        <taxon>Spermatophyta</taxon>
        <taxon>Magnoliopsida</taxon>
        <taxon>eudicotyledons</taxon>
        <taxon>Gunneridae</taxon>
        <taxon>Pentapetalae</taxon>
        <taxon>rosids</taxon>
        <taxon>malvids</taxon>
        <taxon>Brassicales</taxon>
        <taxon>Brassicaceae</taxon>
        <taxon>Camelineae</taxon>
        <taxon>Arabidopsis</taxon>
    </lineage>
</organism>
<protein>
    <recommendedName>
        <fullName>CBS domain-containing protein CBSX5</fullName>
    </recommendedName>
</protein>
<accession>Q84WQ5</accession>
<accession>Q0V7Z3</accession>
<accession>Q5HZ39</accession>
<accession>Q9SZS1</accession>
<sequence>MALSLLSYNVSDLCLGKPPLRCLSSSSSSVSDAIAALKSSEDTFLSVWNCNHDDDNNTECECLGKISMADVICHLSKDHDHSLCALNSSVSVLLPKTRSIVLHVQPSCSLIEAIDLIIKGAQNLIVPIHTKPYTKKKQHNDNVSVTTTTHSNGQRFCWITQEDIIQFLLGFIAAFSPLPAMSLSDLGVINSTHTVVAVDYHSSASAVVSAVSNALAVQTSVAVVDGEGDDPFTSLIGEISPMTLTCCDETAAAAVATLSAGDLMAYIDGANPPESLVQIVRNRLEDKGLIGLMSLFDSLSSYSTSSGYSSEEEAPVRTTSYGRSMSSSARMARKSEAIVCNPKSSLMAVMIQAVAHRVNYAWVVEKDGCFVGMVTFVDILKVFRKFLENDM</sequence>
<comment type="sequence caution" evidence="2">
    <conflict type="erroneous initiation">
        <sequence resource="EMBL-CDS" id="AAW38986"/>
    </conflict>
    <text>Extended N-terminus.</text>
</comment>
<comment type="sequence caution" evidence="2">
    <conflict type="erroneous gene model prediction">
        <sequence resource="EMBL-CDS" id="CAB43878"/>
    </conflict>
</comment>
<comment type="sequence caution" evidence="2">
    <conflict type="erroneous gene model prediction">
        <sequence resource="EMBL-CDS" id="CAB81396"/>
    </conflict>
</comment>
<name>CBSX5_ARATH</name>
<gene>
    <name type="primary">CBSX5</name>
    <name type="ordered locus">At4g27460</name>
    <name type="ORF">F27G19.60</name>
</gene>
<evidence type="ECO:0000255" key="1">
    <source>
        <dbReference type="PROSITE-ProRule" id="PRU00703"/>
    </source>
</evidence>
<evidence type="ECO:0000305" key="2"/>
<reference key="1">
    <citation type="journal article" date="1999" name="Nature">
        <title>Sequence and analysis of chromosome 4 of the plant Arabidopsis thaliana.</title>
        <authorList>
            <person name="Mayer K.F.X."/>
            <person name="Schueller C."/>
            <person name="Wambutt R."/>
            <person name="Murphy G."/>
            <person name="Volckaert G."/>
            <person name="Pohl T."/>
            <person name="Duesterhoeft A."/>
            <person name="Stiekema W."/>
            <person name="Entian K.-D."/>
            <person name="Terryn N."/>
            <person name="Harris B."/>
            <person name="Ansorge W."/>
            <person name="Brandt P."/>
            <person name="Grivell L.A."/>
            <person name="Rieger M."/>
            <person name="Weichselgartner M."/>
            <person name="de Simone V."/>
            <person name="Obermaier B."/>
            <person name="Mache R."/>
            <person name="Mueller M."/>
            <person name="Kreis M."/>
            <person name="Delseny M."/>
            <person name="Puigdomenech P."/>
            <person name="Watson M."/>
            <person name="Schmidtheini T."/>
            <person name="Reichert B."/>
            <person name="Portetelle D."/>
            <person name="Perez-Alonso M."/>
            <person name="Boutry M."/>
            <person name="Bancroft I."/>
            <person name="Vos P."/>
            <person name="Hoheisel J."/>
            <person name="Zimmermann W."/>
            <person name="Wedler H."/>
            <person name="Ridley P."/>
            <person name="Langham S.-A."/>
            <person name="McCullagh B."/>
            <person name="Bilham L."/>
            <person name="Robben J."/>
            <person name="van der Schueren J."/>
            <person name="Grymonprez B."/>
            <person name="Chuang Y.-J."/>
            <person name="Vandenbussche F."/>
            <person name="Braeken M."/>
            <person name="Weltjens I."/>
            <person name="Voet M."/>
            <person name="Bastiaens I."/>
            <person name="Aert R."/>
            <person name="Defoor E."/>
            <person name="Weitzenegger T."/>
            <person name="Bothe G."/>
            <person name="Ramsperger U."/>
            <person name="Hilbert H."/>
            <person name="Braun M."/>
            <person name="Holzer E."/>
            <person name="Brandt A."/>
            <person name="Peters S."/>
            <person name="van Staveren M."/>
            <person name="Dirkse W."/>
            <person name="Mooijman P."/>
            <person name="Klein Lankhorst R."/>
            <person name="Rose M."/>
            <person name="Hauf J."/>
            <person name="Koetter P."/>
            <person name="Berneiser S."/>
            <person name="Hempel S."/>
            <person name="Feldpausch M."/>
            <person name="Lamberth S."/>
            <person name="Van den Daele H."/>
            <person name="De Keyser A."/>
            <person name="Buysshaert C."/>
            <person name="Gielen J."/>
            <person name="Villarroel R."/>
            <person name="De Clercq R."/>
            <person name="van Montagu M."/>
            <person name="Rogers J."/>
            <person name="Cronin A."/>
            <person name="Quail M.A."/>
            <person name="Bray-Allen S."/>
            <person name="Clark L."/>
            <person name="Doggett J."/>
            <person name="Hall S."/>
            <person name="Kay M."/>
            <person name="Lennard N."/>
            <person name="McLay K."/>
            <person name="Mayes R."/>
            <person name="Pettett A."/>
            <person name="Rajandream M.A."/>
            <person name="Lyne M."/>
            <person name="Benes V."/>
            <person name="Rechmann S."/>
            <person name="Borkova D."/>
            <person name="Bloecker H."/>
            <person name="Scharfe M."/>
            <person name="Grimm M."/>
            <person name="Loehnert T.-H."/>
            <person name="Dose S."/>
            <person name="de Haan M."/>
            <person name="Maarse A.C."/>
            <person name="Schaefer M."/>
            <person name="Mueller-Auer S."/>
            <person name="Gabel C."/>
            <person name="Fuchs M."/>
            <person name="Fartmann B."/>
            <person name="Granderath K."/>
            <person name="Dauner D."/>
            <person name="Herzl A."/>
            <person name="Neumann S."/>
            <person name="Argiriou A."/>
            <person name="Vitale D."/>
            <person name="Liguori R."/>
            <person name="Piravandi E."/>
            <person name="Massenet O."/>
            <person name="Quigley F."/>
            <person name="Clabauld G."/>
            <person name="Muendlein A."/>
            <person name="Felber R."/>
            <person name="Schnabl S."/>
            <person name="Hiller R."/>
            <person name="Schmidt W."/>
            <person name="Lecharny A."/>
            <person name="Aubourg S."/>
            <person name="Chefdor F."/>
            <person name="Cooke R."/>
            <person name="Berger C."/>
            <person name="Monfort A."/>
            <person name="Casacuberta E."/>
            <person name="Gibbons T."/>
            <person name="Weber N."/>
            <person name="Vandenbol M."/>
            <person name="Bargues M."/>
            <person name="Terol J."/>
            <person name="Torres A."/>
            <person name="Perez-Perez A."/>
            <person name="Purnelle B."/>
            <person name="Bent E."/>
            <person name="Johnson S."/>
            <person name="Tacon D."/>
            <person name="Jesse T."/>
            <person name="Heijnen L."/>
            <person name="Schwarz S."/>
            <person name="Scholler P."/>
            <person name="Heber S."/>
            <person name="Francs P."/>
            <person name="Bielke C."/>
            <person name="Frishman D."/>
            <person name="Haase D."/>
            <person name="Lemcke K."/>
            <person name="Mewes H.-W."/>
            <person name="Stocker S."/>
            <person name="Zaccaria P."/>
            <person name="Bevan M."/>
            <person name="Wilson R.K."/>
            <person name="de la Bastide M."/>
            <person name="Habermann K."/>
            <person name="Parnell L."/>
            <person name="Dedhia N."/>
            <person name="Gnoj L."/>
            <person name="Schutz K."/>
            <person name="Huang E."/>
            <person name="Spiegel L."/>
            <person name="Sekhon M."/>
            <person name="Murray J."/>
            <person name="Sheet P."/>
            <person name="Cordes M."/>
            <person name="Abu-Threideh J."/>
            <person name="Stoneking T."/>
            <person name="Kalicki J."/>
            <person name="Graves T."/>
            <person name="Harmon G."/>
            <person name="Edwards J."/>
            <person name="Latreille P."/>
            <person name="Courtney L."/>
            <person name="Cloud J."/>
            <person name="Abbott A."/>
            <person name="Scott K."/>
            <person name="Johnson D."/>
            <person name="Minx P."/>
            <person name="Bentley D."/>
            <person name="Fulton B."/>
            <person name="Miller N."/>
            <person name="Greco T."/>
            <person name="Kemp K."/>
            <person name="Kramer J."/>
            <person name="Fulton L."/>
            <person name="Mardis E."/>
            <person name="Dante M."/>
            <person name="Pepin K."/>
            <person name="Hillier L.W."/>
            <person name="Nelson J."/>
            <person name="Spieth J."/>
            <person name="Ryan E."/>
            <person name="Andrews S."/>
            <person name="Geisel C."/>
            <person name="Layman D."/>
            <person name="Du H."/>
            <person name="Ali J."/>
            <person name="Berghoff A."/>
            <person name="Jones K."/>
            <person name="Drone K."/>
            <person name="Cotton M."/>
            <person name="Joshu C."/>
            <person name="Antonoiu B."/>
            <person name="Zidanic M."/>
            <person name="Strong C."/>
            <person name="Sun H."/>
            <person name="Lamar B."/>
            <person name="Yordan C."/>
            <person name="Ma P."/>
            <person name="Zhong J."/>
            <person name="Preston R."/>
            <person name="Vil D."/>
            <person name="Shekher M."/>
            <person name="Matero A."/>
            <person name="Shah R."/>
            <person name="Swaby I.K."/>
            <person name="O'Shaughnessy A."/>
            <person name="Rodriguez M."/>
            <person name="Hoffman J."/>
            <person name="Till S."/>
            <person name="Granat S."/>
            <person name="Shohdy N."/>
            <person name="Hasegawa A."/>
            <person name="Hameed A."/>
            <person name="Lodhi M."/>
            <person name="Johnson A."/>
            <person name="Chen E."/>
            <person name="Marra M.A."/>
            <person name="Martienssen R."/>
            <person name="McCombie W.R."/>
        </authorList>
    </citation>
    <scope>NUCLEOTIDE SEQUENCE [LARGE SCALE GENOMIC DNA]</scope>
    <source>
        <strain>cv. Columbia</strain>
    </source>
</reference>
<reference key="2">
    <citation type="journal article" date="2017" name="Plant J.">
        <title>Araport11: a complete reannotation of the Arabidopsis thaliana reference genome.</title>
        <authorList>
            <person name="Cheng C.Y."/>
            <person name="Krishnakumar V."/>
            <person name="Chan A.P."/>
            <person name="Thibaud-Nissen F."/>
            <person name="Schobel S."/>
            <person name="Town C.D."/>
        </authorList>
    </citation>
    <scope>GENOME REANNOTATION</scope>
    <source>
        <strain>cv. Columbia</strain>
    </source>
</reference>
<reference key="3">
    <citation type="journal article" date="2003" name="Science">
        <title>Empirical analysis of transcriptional activity in the Arabidopsis genome.</title>
        <authorList>
            <person name="Yamada K."/>
            <person name="Lim J."/>
            <person name="Dale J.M."/>
            <person name="Chen H."/>
            <person name="Shinn P."/>
            <person name="Palm C.J."/>
            <person name="Southwick A.M."/>
            <person name="Wu H.C."/>
            <person name="Kim C.J."/>
            <person name="Nguyen M."/>
            <person name="Pham P.K."/>
            <person name="Cheuk R.F."/>
            <person name="Karlin-Newmann G."/>
            <person name="Liu S.X."/>
            <person name="Lam B."/>
            <person name="Sakano H."/>
            <person name="Wu T."/>
            <person name="Yu G."/>
            <person name="Miranda M."/>
            <person name="Quach H.L."/>
            <person name="Tripp M."/>
            <person name="Chang C.H."/>
            <person name="Lee J.M."/>
            <person name="Toriumi M.J."/>
            <person name="Chan M.M."/>
            <person name="Tang C.C."/>
            <person name="Onodera C.S."/>
            <person name="Deng J.M."/>
            <person name="Akiyama K."/>
            <person name="Ansari Y."/>
            <person name="Arakawa T."/>
            <person name="Banh J."/>
            <person name="Banno F."/>
            <person name="Bowser L."/>
            <person name="Brooks S.Y."/>
            <person name="Carninci P."/>
            <person name="Chao Q."/>
            <person name="Choy N."/>
            <person name="Enju A."/>
            <person name="Goldsmith A.D."/>
            <person name="Gurjal M."/>
            <person name="Hansen N.F."/>
            <person name="Hayashizaki Y."/>
            <person name="Johnson-Hopson C."/>
            <person name="Hsuan V.W."/>
            <person name="Iida K."/>
            <person name="Karnes M."/>
            <person name="Khan S."/>
            <person name="Koesema E."/>
            <person name="Ishida J."/>
            <person name="Jiang P.X."/>
            <person name="Jones T."/>
            <person name="Kawai J."/>
            <person name="Kamiya A."/>
            <person name="Meyers C."/>
            <person name="Nakajima M."/>
            <person name="Narusaka M."/>
            <person name="Seki M."/>
            <person name="Sakurai T."/>
            <person name="Satou M."/>
            <person name="Tamse R."/>
            <person name="Vaysberg M."/>
            <person name="Wallender E.K."/>
            <person name="Wong C."/>
            <person name="Yamamura Y."/>
            <person name="Yuan S."/>
            <person name="Shinozaki K."/>
            <person name="Davis R.W."/>
            <person name="Theologis A."/>
            <person name="Ecker J.R."/>
        </authorList>
    </citation>
    <scope>NUCLEOTIDE SEQUENCE [LARGE SCALE MRNA]</scope>
    <source>
        <strain>cv. Columbia</strain>
    </source>
</reference>
<reference key="4">
    <citation type="submission" date="2005-01" db="EMBL/GenBank/DDBJ databases">
        <title>Arabidopsis ORF clones.</title>
        <authorList>
            <person name="Kim C.J."/>
            <person name="Chen H."/>
            <person name="Cheuk R."/>
            <person name="Shinn P."/>
            <person name="Ecker J.R."/>
        </authorList>
    </citation>
    <scope>NUCLEOTIDE SEQUENCE [LARGE SCALE MRNA]</scope>
</reference>
<reference key="5">
    <citation type="submission" date="2006-08" db="EMBL/GenBank/DDBJ databases">
        <title>Arabidopsis ORF Clones.</title>
        <authorList>
            <person name="Quinitio C."/>
            <person name="Chen H."/>
            <person name="Kim C.J."/>
            <person name="Shinn P."/>
            <person name="Ecker J.R."/>
        </authorList>
    </citation>
    <scope>NUCLEOTIDE SEQUENCE [LARGE SCALE MRNA]</scope>
</reference>
<reference key="6">
    <citation type="journal article" date="2009" name="BMC Genomics">
        <title>Genome wide expression analysis of CBS domain containing proteins in Arabidopsis thaliana (L.) Heynh and Oryza sativa L. reveals their developmental and stress regulation.</title>
        <authorList>
            <person name="Kushwaha H.R."/>
            <person name="Singh A.K."/>
            <person name="Sopory S.K."/>
            <person name="Singla-Pareek S.L."/>
            <person name="Pareek A."/>
        </authorList>
    </citation>
    <scope>GENE FAMILY</scope>
    <scope>NOMENCLATURE</scope>
</reference>